<sequence length="133" mass="14930">MDFVMKQALGGATKDMGKMLGGDEEKDPDAEKKEEERLEALRQAEEERAGKYAKMEAEREVMRQGIRDKYGIKKKEEKEAEAMAAMEAQAEGSLTRPKKAIPAGCGDEDEEEESILDTVLKYLPGPLQDMFKK</sequence>
<feature type="chain" id="PRO_0000144873" description="Complexin-1">
    <location>
        <begin position="1"/>
        <end position="133"/>
    </location>
</feature>
<feature type="region of interest" description="Disordered" evidence="3">
    <location>
        <begin position="1"/>
        <end position="40"/>
    </location>
</feature>
<feature type="region of interest" description="Disordered" evidence="3">
    <location>
        <begin position="85"/>
        <end position="112"/>
    </location>
</feature>
<feature type="coiled-coil region" evidence="2">
    <location>
        <begin position="28"/>
        <end position="60"/>
    </location>
</feature>
<feature type="compositionally biased region" description="Basic and acidic residues" evidence="3">
    <location>
        <begin position="15"/>
        <end position="40"/>
    </location>
</feature>
<dbReference type="EMBL" id="AB004245">
    <property type="protein sequence ID" value="BAA22605.1"/>
    <property type="molecule type" value="mRNA"/>
</dbReference>
<dbReference type="SMR" id="O42106"/>
<dbReference type="GO" id="GO:0005829">
    <property type="term" value="C:cytosol"/>
    <property type="evidence" value="ECO:0007669"/>
    <property type="project" value="UniProtKB-SubCell"/>
</dbReference>
<dbReference type="GO" id="GO:0031201">
    <property type="term" value="C:SNARE complex"/>
    <property type="evidence" value="ECO:0007669"/>
    <property type="project" value="TreeGrafter"/>
</dbReference>
<dbReference type="GO" id="GO:0043195">
    <property type="term" value="C:terminal bouton"/>
    <property type="evidence" value="ECO:0007669"/>
    <property type="project" value="TreeGrafter"/>
</dbReference>
<dbReference type="GO" id="GO:0019905">
    <property type="term" value="F:syntaxin binding"/>
    <property type="evidence" value="ECO:0007669"/>
    <property type="project" value="InterPro"/>
</dbReference>
<dbReference type="GO" id="GO:0046928">
    <property type="term" value="P:regulation of neurotransmitter secretion"/>
    <property type="evidence" value="ECO:0007669"/>
    <property type="project" value="TreeGrafter"/>
</dbReference>
<dbReference type="GO" id="GO:0016079">
    <property type="term" value="P:synaptic vesicle exocytosis"/>
    <property type="evidence" value="ECO:0007669"/>
    <property type="project" value="TreeGrafter"/>
</dbReference>
<dbReference type="CDD" id="cd22808">
    <property type="entry name" value="Complexin_NTD_CPLX_I_II"/>
    <property type="match status" value="1"/>
</dbReference>
<dbReference type="FunFam" id="1.20.5.580:FF:000001">
    <property type="entry name" value="Complexin 2"/>
    <property type="match status" value="1"/>
</dbReference>
<dbReference type="Gene3D" id="1.20.5.580">
    <property type="entry name" value="Single Helix bin"/>
    <property type="match status" value="1"/>
</dbReference>
<dbReference type="InterPro" id="IPR008849">
    <property type="entry name" value="Synaphin"/>
</dbReference>
<dbReference type="PANTHER" id="PTHR16705">
    <property type="entry name" value="COMPLEXIN"/>
    <property type="match status" value="1"/>
</dbReference>
<dbReference type="PANTHER" id="PTHR16705:SF6">
    <property type="entry name" value="COMPLEXIN-1"/>
    <property type="match status" value="1"/>
</dbReference>
<dbReference type="Pfam" id="PF05835">
    <property type="entry name" value="Synaphin"/>
    <property type="match status" value="1"/>
</dbReference>
<dbReference type="SUPFAM" id="SSF58038">
    <property type="entry name" value="SNARE fusion complex"/>
    <property type="match status" value="1"/>
</dbReference>
<organism>
    <name type="scientific">Narke japonica</name>
    <name type="common">Japanese sleeper ray</name>
    <name type="synonym">Torpedo japonica</name>
    <dbReference type="NCBI Taxonomy" id="62965"/>
    <lineage>
        <taxon>Eukaryota</taxon>
        <taxon>Metazoa</taxon>
        <taxon>Chordata</taxon>
        <taxon>Craniata</taxon>
        <taxon>Vertebrata</taxon>
        <taxon>Chondrichthyes</taxon>
        <taxon>Elasmobranchii</taxon>
        <taxon>Batoidea</taxon>
        <taxon>Torpediniformes</taxon>
        <taxon>Narkidae</taxon>
        <taxon>Narke</taxon>
    </lineage>
</organism>
<keyword id="KW-0175">Coiled coil</keyword>
<keyword id="KW-0963">Cytoplasm</keyword>
<keyword id="KW-0268">Exocytosis</keyword>
<keyword id="KW-0532">Neurotransmitter transport</keyword>
<keyword id="KW-0813">Transport</keyword>
<protein>
    <recommendedName>
        <fullName>Complexin-1</fullName>
    </recommendedName>
    <alternativeName>
        <fullName>NJ-synaphin-2</fullName>
    </alternativeName>
</protein>
<name>CPLX1_NARJA</name>
<proteinExistence type="evidence at protein level"/>
<reference key="1">
    <citation type="journal article" date="1997" name="Neurosci. Lett.">
        <title>Molecular cloning of synaphins/complexins, cytosolic proteins involved in transmitter release, in the electric organ of an electric ray (Narke japonica).</title>
        <authorList>
            <person name="Ishizuka T."/>
            <person name="Saisu H."/>
            <person name="Suzuki T."/>
            <person name="Kirino Y."/>
            <person name="Abe T."/>
        </authorList>
    </citation>
    <scope>NUCLEOTIDE SEQUENCE [MRNA]</scope>
    <scope>TISSUE SPECIFICITY</scope>
    <scope>SUBUNIT</scope>
    <source>
        <tissue>Electric lobe</tissue>
    </source>
</reference>
<comment type="function">
    <text evidence="1">Positively regulates a late step in synaptic vesicle exocytosis.</text>
</comment>
<comment type="subunit">
    <text evidence="4">Binds to the SNARE core complex containing SNAP25, VAMP2 and syntaxin-1.</text>
</comment>
<comment type="subcellular location">
    <subcellularLocation>
        <location evidence="1">Cytoplasm</location>
        <location evidence="1">Cytosol</location>
    </subcellularLocation>
</comment>
<comment type="tissue specificity">
    <text evidence="4">Nervous system. Present in electric organ (at protein level).</text>
</comment>
<comment type="similarity">
    <text evidence="5">Belongs to the complexin/synaphin family.</text>
</comment>
<evidence type="ECO:0000250" key="1"/>
<evidence type="ECO:0000255" key="2"/>
<evidence type="ECO:0000256" key="3">
    <source>
        <dbReference type="SAM" id="MobiDB-lite"/>
    </source>
</evidence>
<evidence type="ECO:0000269" key="4">
    <source>
    </source>
</evidence>
<evidence type="ECO:0000305" key="5"/>
<accession>O42106</accession>